<gene>
    <name evidence="1" type="primary">grpE</name>
    <name type="ordered locus">PEPE_0895</name>
</gene>
<feature type="chain" id="PRO_1000085118" description="Protein GrpE">
    <location>
        <begin position="1"/>
        <end position="190"/>
    </location>
</feature>
<feature type="region of interest" description="Disordered" evidence="2">
    <location>
        <begin position="1"/>
        <end position="40"/>
    </location>
</feature>
<feature type="compositionally biased region" description="Polar residues" evidence="2">
    <location>
        <begin position="22"/>
        <end position="40"/>
    </location>
</feature>
<keyword id="KW-0143">Chaperone</keyword>
<keyword id="KW-0963">Cytoplasm</keyword>
<keyword id="KW-0346">Stress response</keyword>
<evidence type="ECO:0000255" key="1">
    <source>
        <dbReference type="HAMAP-Rule" id="MF_01151"/>
    </source>
</evidence>
<evidence type="ECO:0000256" key="2">
    <source>
        <dbReference type="SAM" id="MobiDB-lite"/>
    </source>
</evidence>
<reference key="1">
    <citation type="journal article" date="2006" name="Proc. Natl. Acad. Sci. U.S.A.">
        <title>Comparative genomics of the lactic acid bacteria.</title>
        <authorList>
            <person name="Makarova K.S."/>
            <person name="Slesarev A."/>
            <person name="Wolf Y.I."/>
            <person name="Sorokin A."/>
            <person name="Mirkin B."/>
            <person name="Koonin E.V."/>
            <person name="Pavlov A."/>
            <person name="Pavlova N."/>
            <person name="Karamychev V."/>
            <person name="Polouchine N."/>
            <person name="Shakhova V."/>
            <person name="Grigoriev I."/>
            <person name="Lou Y."/>
            <person name="Rohksar D."/>
            <person name="Lucas S."/>
            <person name="Huang K."/>
            <person name="Goodstein D.M."/>
            <person name="Hawkins T."/>
            <person name="Plengvidhya V."/>
            <person name="Welker D."/>
            <person name="Hughes J."/>
            <person name="Goh Y."/>
            <person name="Benson A."/>
            <person name="Baldwin K."/>
            <person name="Lee J.-H."/>
            <person name="Diaz-Muniz I."/>
            <person name="Dosti B."/>
            <person name="Smeianov V."/>
            <person name="Wechter W."/>
            <person name="Barabote R."/>
            <person name="Lorca G."/>
            <person name="Altermann E."/>
            <person name="Barrangou R."/>
            <person name="Ganesan B."/>
            <person name="Xie Y."/>
            <person name="Rawsthorne H."/>
            <person name="Tamir D."/>
            <person name="Parker C."/>
            <person name="Breidt F."/>
            <person name="Broadbent J.R."/>
            <person name="Hutkins R."/>
            <person name="O'Sullivan D."/>
            <person name="Steele J."/>
            <person name="Unlu G."/>
            <person name="Saier M.H. Jr."/>
            <person name="Klaenhammer T."/>
            <person name="Richardson P."/>
            <person name="Kozyavkin S."/>
            <person name="Weimer B.C."/>
            <person name="Mills D.A."/>
        </authorList>
    </citation>
    <scope>NUCLEOTIDE SEQUENCE [LARGE SCALE GENOMIC DNA]</scope>
    <source>
        <strain>ATCC 25745 / CCUG 21536 / LMG 10740 / 183-1w</strain>
    </source>
</reference>
<name>GRPE_PEDPA</name>
<protein>
    <recommendedName>
        <fullName evidence="1">Protein GrpE</fullName>
    </recommendedName>
    <alternativeName>
        <fullName evidence="1">HSP-70 cofactor</fullName>
    </alternativeName>
</protein>
<comment type="function">
    <text evidence="1">Participates actively in the response to hyperosmotic and heat shock by preventing the aggregation of stress-denatured proteins, in association with DnaK and GrpE. It is the nucleotide exchange factor for DnaK and may function as a thermosensor. Unfolded proteins bind initially to DnaJ; upon interaction with the DnaJ-bound protein, DnaK hydrolyzes its bound ATP, resulting in the formation of a stable complex. GrpE releases ADP from DnaK; ATP binding to DnaK triggers the release of the substrate protein, thus completing the reaction cycle. Several rounds of ATP-dependent interactions between DnaJ, DnaK and GrpE are required for fully efficient folding.</text>
</comment>
<comment type="subunit">
    <text evidence="1">Homodimer.</text>
</comment>
<comment type="subcellular location">
    <subcellularLocation>
        <location evidence="1">Cytoplasm</location>
    </subcellularLocation>
</comment>
<comment type="similarity">
    <text evidence="1">Belongs to the GrpE family.</text>
</comment>
<dbReference type="EMBL" id="CP000422">
    <property type="protein sequence ID" value="ABJ67954.1"/>
    <property type="molecule type" value="Genomic_DNA"/>
</dbReference>
<dbReference type="RefSeq" id="WP_011673325.1">
    <property type="nucleotide sequence ID" value="NC_008525.1"/>
</dbReference>
<dbReference type="SMR" id="Q03FR8"/>
<dbReference type="STRING" id="278197.PEPE_0895"/>
<dbReference type="GeneID" id="33062571"/>
<dbReference type="KEGG" id="ppe:PEPE_0895"/>
<dbReference type="eggNOG" id="COG0576">
    <property type="taxonomic scope" value="Bacteria"/>
</dbReference>
<dbReference type="HOGENOM" id="CLU_057217_6_3_9"/>
<dbReference type="Proteomes" id="UP000000773">
    <property type="component" value="Chromosome"/>
</dbReference>
<dbReference type="GO" id="GO:0005737">
    <property type="term" value="C:cytoplasm"/>
    <property type="evidence" value="ECO:0007669"/>
    <property type="project" value="UniProtKB-SubCell"/>
</dbReference>
<dbReference type="GO" id="GO:0000774">
    <property type="term" value="F:adenyl-nucleotide exchange factor activity"/>
    <property type="evidence" value="ECO:0007669"/>
    <property type="project" value="InterPro"/>
</dbReference>
<dbReference type="GO" id="GO:0042803">
    <property type="term" value="F:protein homodimerization activity"/>
    <property type="evidence" value="ECO:0007669"/>
    <property type="project" value="InterPro"/>
</dbReference>
<dbReference type="GO" id="GO:0051087">
    <property type="term" value="F:protein-folding chaperone binding"/>
    <property type="evidence" value="ECO:0007669"/>
    <property type="project" value="InterPro"/>
</dbReference>
<dbReference type="GO" id="GO:0051082">
    <property type="term" value="F:unfolded protein binding"/>
    <property type="evidence" value="ECO:0007669"/>
    <property type="project" value="TreeGrafter"/>
</dbReference>
<dbReference type="GO" id="GO:0006457">
    <property type="term" value="P:protein folding"/>
    <property type="evidence" value="ECO:0007669"/>
    <property type="project" value="InterPro"/>
</dbReference>
<dbReference type="CDD" id="cd00446">
    <property type="entry name" value="GrpE"/>
    <property type="match status" value="1"/>
</dbReference>
<dbReference type="FunFam" id="2.30.22.10:FF:000001">
    <property type="entry name" value="Protein GrpE"/>
    <property type="match status" value="1"/>
</dbReference>
<dbReference type="Gene3D" id="3.90.20.20">
    <property type="match status" value="1"/>
</dbReference>
<dbReference type="Gene3D" id="2.30.22.10">
    <property type="entry name" value="Head domain of nucleotide exchange factor GrpE"/>
    <property type="match status" value="1"/>
</dbReference>
<dbReference type="HAMAP" id="MF_01151">
    <property type="entry name" value="GrpE"/>
    <property type="match status" value="1"/>
</dbReference>
<dbReference type="InterPro" id="IPR000740">
    <property type="entry name" value="GrpE"/>
</dbReference>
<dbReference type="InterPro" id="IPR013805">
    <property type="entry name" value="GrpE_coiled_coil"/>
</dbReference>
<dbReference type="InterPro" id="IPR009012">
    <property type="entry name" value="GrpE_head"/>
</dbReference>
<dbReference type="NCBIfam" id="NF010738">
    <property type="entry name" value="PRK14140.1"/>
    <property type="match status" value="1"/>
</dbReference>
<dbReference type="NCBIfam" id="NF010753">
    <property type="entry name" value="PRK14156.1"/>
    <property type="match status" value="1"/>
</dbReference>
<dbReference type="NCBIfam" id="NF010759">
    <property type="entry name" value="PRK14162.1"/>
    <property type="match status" value="1"/>
</dbReference>
<dbReference type="PANTHER" id="PTHR21237">
    <property type="entry name" value="GRPE PROTEIN"/>
    <property type="match status" value="1"/>
</dbReference>
<dbReference type="PANTHER" id="PTHR21237:SF23">
    <property type="entry name" value="GRPE PROTEIN HOMOLOG, MITOCHONDRIAL"/>
    <property type="match status" value="1"/>
</dbReference>
<dbReference type="Pfam" id="PF01025">
    <property type="entry name" value="GrpE"/>
    <property type="match status" value="1"/>
</dbReference>
<dbReference type="PRINTS" id="PR00773">
    <property type="entry name" value="GRPEPROTEIN"/>
</dbReference>
<dbReference type="SUPFAM" id="SSF58014">
    <property type="entry name" value="Coiled-coil domain of nucleotide exchange factor GrpE"/>
    <property type="match status" value="1"/>
</dbReference>
<dbReference type="SUPFAM" id="SSF51064">
    <property type="entry name" value="Head domain of nucleotide exchange factor GrpE"/>
    <property type="match status" value="1"/>
</dbReference>
<dbReference type="PROSITE" id="PS01071">
    <property type="entry name" value="GRPE"/>
    <property type="match status" value="1"/>
</dbReference>
<organism>
    <name type="scientific">Pediococcus pentosaceus (strain ATCC 25745 / CCUG 21536 / LMG 10740 / 183-1w)</name>
    <dbReference type="NCBI Taxonomy" id="278197"/>
    <lineage>
        <taxon>Bacteria</taxon>
        <taxon>Bacillati</taxon>
        <taxon>Bacillota</taxon>
        <taxon>Bacilli</taxon>
        <taxon>Lactobacillales</taxon>
        <taxon>Lactobacillaceae</taxon>
        <taxon>Pediococcus</taxon>
    </lineage>
</organism>
<accession>Q03FR8</accession>
<sequence>MAKEKKEEVKEEEVSEATSTEGSTDVESTNNDDLTTETQATTALDDIKKVEAERDELSDKYIRAQAEIVNMRRRNEKEQASLIKYDGQKLAKAILPALDNLERALAVESASEQLLKGVKMVQTDLLKALKENHVAEIEAEGQAFDPNMHQAVQTVPADDDHPADTVVQVLQKGYILKDRVLRPAMVIVAQ</sequence>
<proteinExistence type="inferred from homology"/>